<feature type="chain" id="PRO_1000075906" description="2-C-methyl-D-erythritol 2,4-cyclodiphosphate synthase">
    <location>
        <begin position="1"/>
        <end position="161"/>
    </location>
</feature>
<feature type="binding site" evidence="1">
    <location>
        <begin position="11"/>
        <end position="13"/>
    </location>
    <ligand>
        <name>4-CDP-2-C-methyl-D-erythritol 2-phosphate</name>
        <dbReference type="ChEBI" id="CHEBI:57919"/>
    </ligand>
</feature>
<feature type="binding site" evidence="1">
    <location>
        <position position="11"/>
    </location>
    <ligand>
        <name>a divalent metal cation</name>
        <dbReference type="ChEBI" id="CHEBI:60240"/>
    </ligand>
</feature>
<feature type="binding site" evidence="1">
    <location>
        <position position="13"/>
    </location>
    <ligand>
        <name>a divalent metal cation</name>
        <dbReference type="ChEBI" id="CHEBI:60240"/>
    </ligand>
</feature>
<feature type="binding site" evidence="1">
    <location>
        <begin position="37"/>
        <end position="38"/>
    </location>
    <ligand>
        <name>4-CDP-2-C-methyl-D-erythritol 2-phosphate</name>
        <dbReference type="ChEBI" id="CHEBI:57919"/>
    </ligand>
</feature>
<feature type="binding site" evidence="1">
    <location>
        <position position="45"/>
    </location>
    <ligand>
        <name>a divalent metal cation</name>
        <dbReference type="ChEBI" id="CHEBI:60240"/>
    </ligand>
</feature>
<feature type="binding site" evidence="1">
    <location>
        <begin position="59"/>
        <end position="61"/>
    </location>
    <ligand>
        <name>4-CDP-2-C-methyl-D-erythritol 2-phosphate</name>
        <dbReference type="ChEBI" id="CHEBI:57919"/>
    </ligand>
</feature>
<feature type="binding site" evidence="1">
    <location>
        <begin position="135"/>
        <end position="138"/>
    </location>
    <ligand>
        <name>4-CDP-2-C-methyl-D-erythritol 2-phosphate</name>
        <dbReference type="ChEBI" id="CHEBI:57919"/>
    </ligand>
</feature>
<feature type="site" description="Transition state stabilizer" evidence="1">
    <location>
        <position position="37"/>
    </location>
</feature>
<feature type="site" description="Transition state stabilizer" evidence="1">
    <location>
        <position position="136"/>
    </location>
</feature>
<sequence length="161" mass="17370">MTSIRIGNGYDIHQLVEGRPLILGGVQIEHSLGLKGHSDADVLTHAIMDALLGALSLGDIGHYFPPTDPKWAGADSLKLLEQVHQLILDRGWQIGNIDSVVVAERPKLKPHIEAMRDRISQVLNLSPELIGIKATTNEKLGPVGQEQGICSYAVALLTSDS</sequence>
<name>ISPF_ACAM1</name>
<keyword id="KW-0414">Isoprene biosynthesis</keyword>
<keyword id="KW-0456">Lyase</keyword>
<keyword id="KW-0479">Metal-binding</keyword>
<keyword id="KW-1185">Reference proteome</keyword>
<reference key="1">
    <citation type="journal article" date="2008" name="Proc. Natl. Acad. Sci. U.S.A.">
        <title>Niche adaptation and genome expansion in the chlorophyll d-producing cyanobacterium Acaryochloris marina.</title>
        <authorList>
            <person name="Swingley W.D."/>
            <person name="Chen M."/>
            <person name="Cheung P.C."/>
            <person name="Conrad A.L."/>
            <person name="Dejesa L.C."/>
            <person name="Hao J."/>
            <person name="Honchak B.M."/>
            <person name="Karbach L.E."/>
            <person name="Kurdoglu A."/>
            <person name="Lahiri S."/>
            <person name="Mastrian S.D."/>
            <person name="Miyashita H."/>
            <person name="Page L."/>
            <person name="Ramakrishna P."/>
            <person name="Satoh S."/>
            <person name="Sattley W.M."/>
            <person name="Shimada Y."/>
            <person name="Taylor H.L."/>
            <person name="Tomo T."/>
            <person name="Tsuchiya T."/>
            <person name="Wang Z.T."/>
            <person name="Raymond J."/>
            <person name="Mimuro M."/>
            <person name="Blankenship R.E."/>
            <person name="Touchman J.W."/>
        </authorList>
    </citation>
    <scope>NUCLEOTIDE SEQUENCE [LARGE SCALE GENOMIC DNA]</scope>
    <source>
        <strain>MBIC 11017</strain>
    </source>
</reference>
<protein>
    <recommendedName>
        <fullName evidence="1">2-C-methyl-D-erythritol 2,4-cyclodiphosphate synthase</fullName>
        <shortName evidence="1">MECDP-synthase</shortName>
        <shortName evidence="1">MECPP-synthase</shortName>
        <shortName evidence="1">MECPS</shortName>
        <ecNumber evidence="1">4.6.1.12</ecNumber>
    </recommendedName>
</protein>
<proteinExistence type="inferred from homology"/>
<evidence type="ECO:0000255" key="1">
    <source>
        <dbReference type="HAMAP-Rule" id="MF_00107"/>
    </source>
</evidence>
<gene>
    <name evidence="1" type="primary">ispF</name>
    <name type="ordered locus">AM1_2915</name>
</gene>
<accession>B0CBC9</accession>
<comment type="function">
    <text evidence="1">Involved in the biosynthesis of isopentenyl diphosphate (IPP) and dimethylallyl diphosphate (DMAPP), two major building blocks of isoprenoid compounds. Catalyzes the conversion of 4-diphosphocytidyl-2-C-methyl-D-erythritol 2-phosphate (CDP-ME2P) to 2-C-methyl-D-erythritol 2,4-cyclodiphosphate (ME-CPP) with a corresponding release of cytidine 5-monophosphate (CMP).</text>
</comment>
<comment type="catalytic activity">
    <reaction evidence="1">
        <text>4-CDP-2-C-methyl-D-erythritol 2-phosphate = 2-C-methyl-D-erythritol 2,4-cyclic diphosphate + CMP</text>
        <dbReference type="Rhea" id="RHEA:23864"/>
        <dbReference type="ChEBI" id="CHEBI:57919"/>
        <dbReference type="ChEBI" id="CHEBI:58483"/>
        <dbReference type="ChEBI" id="CHEBI:60377"/>
        <dbReference type="EC" id="4.6.1.12"/>
    </reaction>
</comment>
<comment type="cofactor">
    <cofactor evidence="1">
        <name>a divalent metal cation</name>
        <dbReference type="ChEBI" id="CHEBI:60240"/>
    </cofactor>
    <text evidence="1">Binds 1 divalent metal cation per subunit.</text>
</comment>
<comment type="pathway">
    <text evidence="1">Isoprenoid biosynthesis; isopentenyl diphosphate biosynthesis via DXP pathway; isopentenyl diphosphate from 1-deoxy-D-xylulose 5-phosphate: step 4/6.</text>
</comment>
<comment type="subunit">
    <text evidence="1">Homotrimer.</text>
</comment>
<comment type="similarity">
    <text evidence="1">Belongs to the IspF family.</text>
</comment>
<dbReference type="EC" id="4.6.1.12" evidence="1"/>
<dbReference type="EMBL" id="CP000828">
    <property type="protein sequence ID" value="ABW27914.1"/>
    <property type="molecule type" value="Genomic_DNA"/>
</dbReference>
<dbReference type="RefSeq" id="WP_012163350.1">
    <property type="nucleotide sequence ID" value="NC_009925.1"/>
</dbReference>
<dbReference type="SMR" id="B0CBC9"/>
<dbReference type="STRING" id="329726.AM1_2915"/>
<dbReference type="KEGG" id="amr:AM1_2915"/>
<dbReference type="eggNOG" id="COG0245">
    <property type="taxonomic scope" value="Bacteria"/>
</dbReference>
<dbReference type="HOGENOM" id="CLU_084630_2_0_3"/>
<dbReference type="OrthoDB" id="9804336at2"/>
<dbReference type="UniPathway" id="UPA00056">
    <property type="reaction ID" value="UER00095"/>
</dbReference>
<dbReference type="Proteomes" id="UP000000268">
    <property type="component" value="Chromosome"/>
</dbReference>
<dbReference type="GO" id="GO:0008685">
    <property type="term" value="F:2-C-methyl-D-erythritol 2,4-cyclodiphosphate synthase activity"/>
    <property type="evidence" value="ECO:0007669"/>
    <property type="project" value="UniProtKB-UniRule"/>
</dbReference>
<dbReference type="GO" id="GO:0046872">
    <property type="term" value="F:metal ion binding"/>
    <property type="evidence" value="ECO:0007669"/>
    <property type="project" value="UniProtKB-KW"/>
</dbReference>
<dbReference type="GO" id="GO:0019288">
    <property type="term" value="P:isopentenyl diphosphate biosynthetic process, methylerythritol 4-phosphate pathway"/>
    <property type="evidence" value="ECO:0007669"/>
    <property type="project" value="UniProtKB-UniRule"/>
</dbReference>
<dbReference type="GO" id="GO:0016114">
    <property type="term" value="P:terpenoid biosynthetic process"/>
    <property type="evidence" value="ECO:0007669"/>
    <property type="project" value="InterPro"/>
</dbReference>
<dbReference type="CDD" id="cd00554">
    <property type="entry name" value="MECDP_synthase"/>
    <property type="match status" value="1"/>
</dbReference>
<dbReference type="FunFam" id="3.30.1330.50:FF:000001">
    <property type="entry name" value="2-C-methyl-D-erythritol 2,4-cyclodiphosphate synthase"/>
    <property type="match status" value="1"/>
</dbReference>
<dbReference type="Gene3D" id="3.30.1330.50">
    <property type="entry name" value="2-C-methyl-D-erythritol 2,4-cyclodiphosphate synthase"/>
    <property type="match status" value="1"/>
</dbReference>
<dbReference type="HAMAP" id="MF_00107">
    <property type="entry name" value="IspF"/>
    <property type="match status" value="1"/>
</dbReference>
<dbReference type="InterPro" id="IPR003526">
    <property type="entry name" value="MECDP_synthase"/>
</dbReference>
<dbReference type="InterPro" id="IPR020555">
    <property type="entry name" value="MECDP_synthase_CS"/>
</dbReference>
<dbReference type="InterPro" id="IPR036571">
    <property type="entry name" value="MECDP_synthase_sf"/>
</dbReference>
<dbReference type="NCBIfam" id="TIGR00151">
    <property type="entry name" value="ispF"/>
    <property type="match status" value="1"/>
</dbReference>
<dbReference type="PANTHER" id="PTHR43181">
    <property type="entry name" value="2-C-METHYL-D-ERYTHRITOL 2,4-CYCLODIPHOSPHATE SYNTHASE, CHLOROPLASTIC"/>
    <property type="match status" value="1"/>
</dbReference>
<dbReference type="PANTHER" id="PTHR43181:SF1">
    <property type="entry name" value="2-C-METHYL-D-ERYTHRITOL 2,4-CYCLODIPHOSPHATE SYNTHASE, CHLOROPLASTIC"/>
    <property type="match status" value="1"/>
</dbReference>
<dbReference type="Pfam" id="PF02542">
    <property type="entry name" value="YgbB"/>
    <property type="match status" value="1"/>
</dbReference>
<dbReference type="SUPFAM" id="SSF69765">
    <property type="entry name" value="IpsF-like"/>
    <property type="match status" value="1"/>
</dbReference>
<dbReference type="PROSITE" id="PS01350">
    <property type="entry name" value="ISPF"/>
    <property type="match status" value="1"/>
</dbReference>
<organism>
    <name type="scientific">Acaryochloris marina (strain MBIC 11017)</name>
    <dbReference type="NCBI Taxonomy" id="329726"/>
    <lineage>
        <taxon>Bacteria</taxon>
        <taxon>Bacillati</taxon>
        <taxon>Cyanobacteriota</taxon>
        <taxon>Cyanophyceae</taxon>
        <taxon>Acaryochloridales</taxon>
        <taxon>Acaryochloridaceae</taxon>
        <taxon>Acaryochloris</taxon>
    </lineage>
</organism>